<feature type="chain" id="PRO_1000197647" description="Nucleoid-associated protein Cla_0113">
    <location>
        <begin position="1"/>
        <end position="101"/>
    </location>
</feature>
<evidence type="ECO:0000255" key="1">
    <source>
        <dbReference type="HAMAP-Rule" id="MF_00274"/>
    </source>
</evidence>
<protein>
    <recommendedName>
        <fullName evidence="1">Nucleoid-associated protein Cla_0113</fullName>
    </recommendedName>
</protein>
<keyword id="KW-0963">Cytoplasm</keyword>
<keyword id="KW-0238">DNA-binding</keyword>
<keyword id="KW-1185">Reference proteome</keyword>
<accession>B9KEJ4</accession>
<dbReference type="EMBL" id="CP000932">
    <property type="protein sequence ID" value="ACM63479.1"/>
    <property type="molecule type" value="Genomic_DNA"/>
</dbReference>
<dbReference type="RefSeq" id="WP_012660864.1">
    <property type="nucleotide sequence ID" value="NC_012039.1"/>
</dbReference>
<dbReference type="SMR" id="B9KEJ4"/>
<dbReference type="STRING" id="306263.Cla_0113"/>
<dbReference type="KEGG" id="cla:CLA_0113"/>
<dbReference type="PATRIC" id="fig|306263.5.peg.113"/>
<dbReference type="eggNOG" id="COG0718">
    <property type="taxonomic scope" value="Bacteria"/>
</dbReference>
<dbReference type="HOGENOM" id="CLU_140930_2_1_7"/>
<dbReference type="Proteomes" id="UP000007727">
    <property type="component" value="Chromosome"/>
</dbReference>
<dbReference type="GO" id="GO:0043590">
    <property type="term" value="C:bacterial nucleoid"/>
    <property type="evidence" value="ECO:0007669"/>
    <property type="project" value="UniProtKB-UniRule"/>
</dbReference>
<dbReference type="GO" id="GO:0005829">
    <property type="term" value="C:cytosol"/>
    <property type="evidence" value="ECO:0007669"/>
    <property type="project" value="TreeGrafter"/>
</dbReference>
<dbReference type="GO" id="GO:0003677">
    <property type="term" value="F:DNA binding"/>
    <property type="evidence" value="ECO:0007669"/>
    <property type="project" value="UniProtKB-UniRule"/>
</dbReference>
<dbReference type="Gene3D" id="3.30.1310.10">
    <property type="entry name" value="Nucleoid-associated protein YbaB-like domain"/>
    <property type="match status" value="1"/>
</dbReference>
<dbReference type="HAMAP" id="MF_00274">
    <property type="entry name" value="DNA_YbaB_EbfC"/>
    <property type="match status" value="1"/>
</dbReference>
<dbReference type="InterPro" id="IPR036894">
    <property type="entry name" value="YbaB-like_sf"/>
</dbReference>
<dbReference type="InterPro" id="IPR004401">
    <property type="entry name" value="YbaB/EbfC"/>
</dbReference>
<dbReference type="NCBIfam" id="TIGR00103">
    <property type="entry name" value="DNA_YbaB_EbfC"/>
    <property type="match status" value="1"/>
</dbReference>
<dbReference type="PANTHER" id="PTHR33449">
    <property type="entry name" value="NUCLEOID-ASSOCIATED PROTEIN YBAB"/>
    <property type="match status" value="1"/>
</dbReference>
<dbReference type="PANTHER" id="PTHR33449:SF1">
    <property type="entry name" value="NUCLEOID-ASSOCIATED PROTEIN YBAB"/>
    <property type="match status" value="1"/>
</dbReference>
<dbReference type="Pfam" id="PF02575">
    <property type="entry name" value="YbaB_DNA_bd"/>
    <property type="match status" value="1"/>
</dbReference>
<dbReference type="PIRSF" id="PIRSF004555">
    <property type="entry name" value="UCP004555"/>
    <property type="match status" value="1"/>
</dbReference>
<dbReference type="SUPFAM" id="SSF82607">
    <property type="entry name" value="YbaB-like"/>
    <property type="match status" value="1"/>
</dbReference>
<proteinExistence type="inferred from homology"/>
<name>Y113_CAMLR</name>
<sequence length="101" mass="11059">MFENMDFSKMGELLTKAQEKANELEQEALKKEFSAKSGGGLVKVSANGKGEIIDINIDDSLLEDKESMQILLIAAINDVMKMVEQNKKSMASNLFSGMGVL</sequence>
<gene>
    <name type="ordered locus">Cla_0113</name>
</gene>
<organism>
    <name type="scientific">Campylobacter lari (strain RM2100 / D67 / ATCC BAA-1060)</name>
    <dbReference type="NCBI Taxonomy" id="306263"/>
    <lineage>
        <taxon>Bacteria</taxon>
        <taxon>Pseudomonadati</taxon>
        <taxon>Campylobacterota</taxon>
        <taxon>Epsilonproteobacteria</taxon>
        <taxon>Campylobacterales</taxon>
        <taxon>Campylobacteraceae</taxon>
        <taxon>Campylobacter</taxon>
    </lineage>
</organism>
<reference key="1">
    <citation type="journal article" date="2008" name="Foodborne Pathog. Dis.">
        <title>The complete genome sequence and analysis of the human pathogen Campylobacter lari.</title>
        <authorList>
            <person name="Miller W.G."/>
            <person name="Wang G."/>
            <person name="Binnewies T.T."/>
            <person name="Parker C.T."/>
        </authorList>
    </citation>
    <scope>NUCLEOTIDE SEQUENCE [LARGE SCALE GENOMIC DNA]</scope>
    <source>
        <strain>RM2100 / D67 / ATCC BAA-1060</strain>
    </source>
</reference>
<comment type="function">
    <text evidence="1">Binds to DNA and alters its conformation. May be involved in regulation of gene expression, nucleoid organization and DNA protection.</text>
</comment>
<comment type="subunit">
    <text evidence="1">Homodimer.</text>
</comment>
<comment type="subcellular location">
    <subcellularLocation>
        <location evidence="1">Cytoplasm</location>
        <location evidence="1">Nucleoid</location>
    </subcellularLocation>
</comment>
<comment type="similarity">
    <text evidence="1">Belongs to the YbaB/EbfC family.</text>
</comment>